<feature type="chain" id="PRO_0000200085" description="Homeobox protein Hox-A9b">
    <location>
        <begin position="1"/>
        <end position="253"/>
    </location>
</feature>
<feature type="DNA-binding region" description="Homeobox" evidence="2">
    <location>
        <begin position="187"/>
        <end position="246"/>
    </location>
</feature>
<feature type="region of interest" description="Disordered" evidence="3">
    <location>
        <begin position="142"/>
        <end position="188"/>
    </location>
</feature>
<feature type="compositionally biased region" description="Basic and acidic residues" evidence="3">
    <location>
        <begin position="159"/>
        <end position="172"/>
    </location>
</feature>
<feature type="sequence conflict" description="In Ref. 1; AAD15942." evidence="4" ref="1">
    <original>I</original>
    <variation>L</variation>
    <location>
        <position position="15"/>
    </location>
</feature>
<feature type="sequence conflict" description="In Ref. 1; AAD15942." evidence="4" ref="1">
    <original>S</original>
    <variation>L</variation>
    <location>
        <position position="178"/>
    </location>
</feature>
<organism>
    <name type="scientific">Danio rerio</name>
    <name type="common">Zebrafish</name>
    <name type="synonym">Brachydanio rerio</name>
    <dbReference type="NCBI Taxonomy" id="7955"/>
    <lineage>
        <taxon>Eukaryota</taxon>
        <taxon>Metazoa</taxon>
        <taxon>Chordata</taxon>
        <taxon>Craniata</taxon>
        <taxon>Vertebrata</taxon>
        <taxon>Euteleostomi</taxon>
        <taxon>Actinopterygii</taxon>
        <taxon>Neopterygii</taxon>
        <taxon>Teleostei</taxon>
        <taxon>Ostariophysi</taxon>
        <taxon>Cypriniformes</taxon>
        <taxon>Danionidae</taxon>
        <taxon>Danioninae</taxon>
        <taxon>Danio</taxon>
    </lineage>
</organism>
<reference key="1">
    <citation type="journal article" date="1998" name="Science">
        <title>Zebrafish hox clusters and vertebrate genome evolution.</title>
        <authorList>
            <person name="Amores A."/>
            <person name="Force A."/>
            <person name="Yan Y.-L."/>
            <person name="Joly L."/>
            <person name="Amemiya C."/>
            <person name="Fritz A."/>
            <person name="Ho R.K."/>
            <person name="Langeland J."/>
            <person name="Prince V.E."/>
            <person name="Wang Y.-L."/>
            <person name="Westerfield M."/>
            <person name="Ekker M."/>
            <person name="Postlethwait J.H."/>
        </authorList>
    </citation>
    <scope>NUCLEOTIDE SEQUENCE [GENOMIC DNA]</scope>
</reference>
<reference key="2">
    <citation type="journal article" date="2013" name="Nature">
        <title>The zebrafish reference genome sequence and its relationship to the human genome.</title>
        <authorList>
            <person name="Howe K."/>
            <person name="Clark M.D."/>
            <person name="Torroja C.F."/>
            <person name="Torrance J."/>
            <person name="Berthelot C."/>
            <person name="Muffato M."/>
            <person name="Collins J.E."/>
            <person name="Humphray S."/>
            <person name="McLaren K."/>
            <person name="Matthews L."/>
            <person name="McLaren S."/>
            <person name="Sealy I."/>
            <person name="Caccamo M."/>
            <person name="Churcher C."/>
            <person name="Scott C."/>
            <person name="Barrett J.C."/>
            <person name="Koch R."/>
            <person name="Rauch G.J."/>
            <person name="White S."/>
            <person name="Chow W."/>
            <person name="Kilian B."/>
            <person name="Quintais L.T."/>
            <person name="Guerra-Assuncao J.A."/>
            <person name="Zhou Y."/>
            <person name="Gu Y."/>
            <person name="Yen J."/>
            <person name="Vogel J.H."/>
            <person name="Eyre T."/>
            <person name="Redmond S."/>
            <person name="Banerjee R."/>
            <person name="Chi J."/>
            <person name="Fu B."/>
            <person name="Langley E."/>
            <person name="Maguire S.F."/>
            <person name="Laird G.K."/>
            <person name="Lloyd D."/>
            <person name="Kenyon E."/>
            <person name="Donaldson S."/>
            <person name="Sehra H."/>
            <person name="Almeida-King J."/>
            <person name="Loveland J."/>
            <person name="Trevanion S."/>
            <person name="Jones M."/>
            <person name="Quail M."/>
            <person name="Willey D."/>
            <person name="Hunt A."/>
            <person name="Burton J."/>
            <person name="Sims S."/>
            <person name="McLay K."/>
            <person name="Plumb B."/>
            <person name="Davis J."/>
            <person name="Clee C."/>
            <person name="Oliver K."/>
            <person name="Clark R."/>
            <person name="Riddle C."/>
            <person name="Elliot D."/>
            <person name="Threadgold G."/>
            <person name="Harden G."/>
            <person name="Ware D."/>
            <person name="Begum S."/>
            <person name="Mortimore B."/>
            <person name="Kerry G."/>
            <person name="Heath P."/>
            <person name="Phillimore B."/>
            <person name="Tracey A."/>
            <person name="Corby N."/>
            <person name="Dunn M."/>
            <person name="Johnson C."/>
            <person name="Wood J."/>
            <person name="Clark S."/>
            <person name="Pelan S."/>
            <person name="Griffiths G."/>
            <person name="Smith M."/>
            <person name="Glithero R."/>
            <person name="Howden P."/>
            <person name="Barker N."/>
            <person name="Lloyd C."/>
            <person name="Stevens C."/>
            <person name="Harley J."/>
            <person name="Holt K."/>
            <person name="Panagiotidis G."/>
            <person name="Lovell J."/>
            <person name="Beasley H."/>
            <person name="Henderson C."/>
            <person name="Gordon D."/>
            <person name="Auger K."/>
            <person name="Wright D."/>
            <person name="Collins J."/>
            <person name="Raisen C."/>
            <person name="Dyer L."/>
            <person name="Leung K."/>
            <person name="Robertson L."/>
            <person name="Ambridge K."/>
            <person name="Leongamornlert D."/>
            <person name="McGuire S."/>
            <person name="Gilderthorp R."/>
            <person name="Griffiths C."/>
            <person name="Manthravadi D."/>
            <person name="Nichol S."/>
            <person name="Barker G."/>
            <person name="Whitehead S."/>
            <person name="Kay M."/>
            <person name="Brown J."/>
            <person name="Murnane C."/>
            <person name="Gray E."/>
            <person name="Humphries M."/>
            <person name="Sycamore N."/>
            <person name="Barker D."/>
            <person name="Saunders D."/>
            <person name="Wallis J."/>
            <person name="Babbage A."/>
            <person name="Hammond S."/>
            <person name="Mashreghi-Mohammadi M."/>
            <person name="Barr L."/>
            <person name="Martin S."/>
            <person name="Wray P."/>
            <person name="Ellington A."/>
            <person name="Matthews N."/>
            <person name="Ellwood M."/>
            <person name="Woodmansey R."/>
            <person name="Clark G."/>
            <person name="Cooper J."/>
            <person name="Tromans A."/>
            <person name="Grafham D."/>
            <person name="Skuce C."/>
            <person name="Pandian R."/>
            <person name="Andrews R."/>
            <person name="Harrison E."/>
            <person name="Kimberley A."/>
            <person name="Garnett J."/>
            <person name="Fosker N."/>
            <person name="Hall R."/>
            <person name="Garner P."/>
            <person name="Kelly D."/>
            <person name="Bird C."/>
            <person name="Palmer S."/>
            <person name="Gehring I."/>
            <person name="Berger A."/>
            <person name="Dooley C.M."/>
            <person name="Ersan-Urun Z."/>
            <person name="Eser C."/>
            <person name="Geiger H."/>
            <person name="Geisler M."/>
            <person name="Karotki L."/>
            <person name="Kirn A."/>
            <person name="Konantz J."/>
            <person name="Konantz M."/>
            <person name="Oberlander M."/>
            <person name="Rudolph-Geiger S."/>
            <person name="Teucke M."/>
            <person name="Lanz C."/>
            <person name="Raddatz G."/>
            <person name="Osoegawa K."/>
            <person name="Zhu B."/>
            <person name="Rapp A."/>
            <person name="Widaa S."/>
            <person name="Langford C."/>
            <person name="Yang F."/>
            <person name="Schuster S.C."/>
            <person name="Carter N.P."/>
            <person name="Harrow J."/>
            <person name="Ning Z."/>
            <person name="Herrero J."/>
            <person name="Searle S.M."/>
            <person name="Enright A."/>
            <person name="Geisler R."/>
            <person name="Plasterk R.H."/>
            <person name="Lee C."/>
            <person name="Westerfield M."/>
            <person name="de Jong P.J."/>
            <person name="Zon L.I."/>
            <person name="Postlethwait J.H."/>
            <person name="Nusslein-Volhard C."/>
            <person name="Hubbard T.J."/>
            <person name="Roest Crollius H."/>
            <person name="Rogers J."/>
            <person name="Stemple D.L."/>
        </authorList>
    </citation>
    <scope>NUCLEOTIDE SEQUENCE [LARGE SCALE GENOMIC DNA]</scope>
    <source>
        <strain>Tuebingen</strain>
    </source>
</reference>
<reference key="3">
    <citation type="submission" date="2005-05" db="EMBL/GenBank/DDBJ databases">
        <authorList>
            <consortium name="NIH - Zebrafish Gene Collection (ZGC) project"/>
        </authorList>
    </citation>
    <scope>NUCLEOTIDE SEQUENCE [LARGE SCALE MRNA]</scope>
    <source>
        <tissue>Embryo</tissue>
    </source>
</reference>
<reference key="4">
    <citation type="journal article" date="2005" name="Evol. Dev.">
        <title>Genomic annotation and transcriptome analysis of the zebrafish (Danio rerio) hox complex with description of a novel member, hoxb13a.</title>
        <authorList>
            <person name="Corredor-Adamez M."/>
            <person name="Welten M.C.M."/>
            <person name="Spaink H.P."/>
            <person name="Jeffery J.E."/>
            <person name="Schoon R.T."/>
            <person name="de Bakker M.A.G."/>
            <person name="Bagowski C.P."/>
            <person name="Meijer A.H."/>
            <person name="Verbeek F.J."/>
            <person name="Richardson M.K."/>
        </authorList>
    </citation>
    <scope>NUCLEOTIDE SEQUENCE [MRNA] OF 87-181</scope>
    <source>
        <strain>Tuebingen</strain>
    </source>
</reference>
<gene>
    <name type="primary">hoxa9b</name>
    <name type="ORF">zgc:110504</name>
</gene>
<protein>
    <recommendedName>
        <fullName>Homeobox protein Hox-A9b</fullName>
    </recommendedName>
</protein>
<proteinExistence type="evidence at transcript level"/>
<evidence type="ECO:0000250" key="1"/>
<evidence type="ECO:0000255" key="2">
    <source>
        <dbReference type="PROSITE-ProRule" id="PRU00108"/>
    </source>
</evidence>
<evidence type="ECO:0000256" key="3">
    <source>
        <dbReference type="SAM" id="MobiDB-lite"/>
    </source>
</evidence>
<evidence type="ECO:0000305" key="4"/>
<sequence length="253" mass="28795">MSTLGTLSYYADSHIPHENDDHLAPRFSSGPVVQQQSRELTLLEYSEQEPYTFQAKSSIFGASWSPVQPTGASIAYHPYIHHPCSTGDSDGASVRPWALEPLPALPFTGLSTDTHQDIKLEPLVGSGECTTHTLLVAETDNNTTQTERKVPDDAVSNGSHDEKIPAETKLDLDPNNPSSNWLHAKSTRKKRCPYTKHQTLELEKEFLFNMYLSRDRRYEVARLLNLTERQVKIWFQNRRMKMKKCNKDRPKDI</sequence>
<name>HXA9B_DANRE</name>
<comment type="function">
    <text evidence="1">Sequence-specific transcription factor which is part of a developmental regulatory system that provides cells with specific positional identities on the anterior-posterior axis.</text>
</comment>
<comment type="subcellular location">
    <subcellularLocation>
        <location evidence="2">Nucleus</location>
    </subcellularLocation>
</comment>
<comment type="similarity">
    <text evidence="4">Belongs to the Abd-B homeobox family.</text>
</comment>
<comment type="sequence caution" evidence="4">
    <conflict type="erroneous gene model prediction">
        <sequence resource="EMBL-CDS" id="AAD15942"/>
    </conflict>
</comment>
<comment type="sequence caution" evidence="4">
    <conflict type="erroneous gene model prediction">
        <sequence resource="EMBL-CDS" id="CAD59109"/>
    </conflict>
</comment>
<dbReference type="EMBL" id="AF071249">
    <property type="protein sequence ID" value="AAD15942.1"/>
    <property type="status" value="ALT_SEQ"/>
    <property type="molecule type" value="Genomic_DNA"/>
</dbReference>
<dbReference type="EMBL" id="AL645795">
    <property type="protein sequence ID" value="CAD59109.1"/>
    <property type="status" value="ALT_SEQ"/>
    <property type="molecule type" value="Genomic_DNA"/>
</dbReference>
<dbReference type="EMBL" id="BC095300">
    <property type="protein sequence ID" value="AAH95300.1"/>
    <property type="molecule type" value="mRNA"/>
</dbReference>
<dbReference type="EMBL" id="DQ060537">
    <property type="protein sequence ID" value="AAY67915.1"/>
    <property type="molecule type" value="mRNA"/>
</dbReference>
<dbReference type="RefSeq" id="NP_571608.1">
    <property type="nucleotide sequence ID" value="NM_131533.1"/>
</dbReference>
<dbReference type="SMR" id="Q9YGT5"/>
<dbReference type="FunCoup" id="Q9YGT5">
    <property type="interactions" value="1"/>
</dbReference>
<dbReference type="STRING" id="7955.ENSDARP00000073839"/>
<dbReference type="PaxDb" id="7955-ENSDARP00000073839"/>
<dbReference type="GeneID" id="58048"/>
<dbReference type="KEGG" id="dre:58048"/>
<dbReference type="AGR" id="ZFIN:ZDB-GENE-000823-2"/>
<dbReference type="CTD" id="58048"/>
<dbReference type="ZFIN" id="ZDB-GENE-000823-2">
    <property type="gene designation" value="hoxa9b"/>
</dbReference>
<dbReference type="eggNOG" id="KOG0487">
    <property type="taxonomic scope" value="Eukaryota"/>
</dbReference>
<dbReference type="InParanoid" id="Q9YGT5"/>
<dbReference type="OrthoDB" id="6159439at2759"/>
<dbReference type="PhylomeDB" id="Q9YGT5"/>
<dbReference type="PRO" id="PR:Q9YGT5"/>
<dbReference type="Proteomes" id="UP000000437">
    <property type="component" value="Chromosome 16"/>
</dbReference>
<dbReference type="GO" id="GO:0005634">
    <property type="term" value="C:nucleus"/>
    <property type="evidence" value="ECO:0000318"/>
    <property type="project" value="GO_Central"/>
</dbReference>
<dbReference type="GO" id="GO:0003700">
    <property type="term" value="F:DNA-binding transcription factor activity"/>
    <property type="evidence" value="ECO:0000318"/>
    <property type="project" value="GO_Central"/>
</dbReference>
<dbReference type="GO" id="GO:0000981">
    <property type="term" value="F:DNA-binding transcription factor activity, RNA polymerase II-specific"/>
    <property type="evidence" value="ECO:0007669"/>
    <property type="project" value="InterPro"/>
</dbReference>
<dbReference type="GO" id="GO:0000978">
    <property type="term" value="F:RNA polymerase II cis-regulatory region sequence-specific DNA binding"/>
    <property type="evidence" value="ECO:0000318"/>
    <property type="project" value="GO_Central"/>
</dbReference>
<dbReference type="GO" id="GO:0009952">
    <property type="term" value="P:anterior/posterior pattern specification"/>
    <property type="evidence" value="ECO:0000318"/>
    <property type="project" value="GO_Central"/>
</dbReference>
<dbReference type="GO" id="GO:0006351">
    <property type="term" value="P:DNA-templated transcription"/>
    <property type="evidence" value="ECO:0007669"/>
    <property type="project" value="InterPro"/>
</dbReference>
<dbReference type="GO" id="GO:0048704">
    <property type="term" value="P:embryonic skeletal system morphogenesis"/>
    <property type="evidence" value="ECO:0000318"/>
    <property type="project" value="GO_Central"/>
</dbReference>
<dbReference type="GO" id="GO:0009954">
    <property type="term" value="P:proximal/distal pattern formation"/>
    <property type="evidence" value="ECO:0000318"/>
    <property type="project" value="GO_Central"/>
</dbReference>
<dbReference type="GO" id="GO:0006357">
    <property type="term" value="P:regulation of transcription by RNA polymerase II"/>
    <property type="evidence" value="ECO:0000318"/>
    <property type="project" value="GO_Central"/>
</dbReference>
<dbReference type="CDD" id="cd00086">
    <property type="entry name" value="homeodomain"/>
    <property type="match status" value="1"/>
</dbReference>
<dbReference type="FunFam" id="1.10.10.60:FF:000018">
    <property type="entry name" value="Homeobox A10"/>
    <property type="match status" value="1"/>
</dbReference>
<dbReference type="Gene3D" id="1.10.10.60">
    <property type="entry name" value="Homeodomain-like"/>
    <property type="match status" value="1"/>
</dbReference>
<dbReference type="InterPro" id="IPR050803">
    <property type="entry name" value="Abd-B_homeobox_TF"/>
</dbReference>
<dbReference type="InterPro" id="IPR001356">
    <property type="entry name" value="HD"/>
</dbReference>
<dbReference type="InterPro" id="IPR020479">
    <property type="entry name" value="HD_metazoa"/>
</dbReference>
<dbReference type="InterPro" id="IPR017970">
    <property type="entry name" value="Homeobox_CS"/>
</dbReference>
<dbReference type="InterPro" id="IPR009057">
    <property type="entry name" value="Homeodomain-like_sf"/>
</dbReference>
<dbReference type="InterPro" id="IPR006711">
    <property type="entry name" value="Hox9_activation_N"/>
</dbReference>
<dbReference type="InterPro" id="IPR017112">
    <property type="entry name" value="HXA9/HXB9/HXC9"/>
</dbReference>
<dbReference type="PANTHER" id="PTHR45970">
    <property type="entry name" value="AGAP004664-PA"/>
    <property type="match status" value="1"/>
</dbReference>
<dbReference type="PANTHER" id="PTHR45970:SF3">
    <property type="entry name" value="HOMEOBOX PROTEIN HOX-A9"/>
    <property type="match status" value="1"/>
</dbReference>
<dbReference type="Pfam" id="PF00046">
    <property type="entry name" value="Homeodomain"/>
    <property type="match status" value="1"/>
</dbReference>
<dbReference type="Pfam" id="PF04617">
    <property type="entry name" value="Hox9_act"/>
    <property type="match status" value="1"/>
</dbReference>
<dbReference type="PIRSF" id="PIRSF037109">
    <property type="entry name" value="Homeobox_Hox9"/>
    <property type="match status" value="1"/>
</dbReference>
<dbReference type="PRINTS" id="PR00024">
    <property type="entry name" value="HOMEOBOX"/>
</dbReference>
<dbReference type="SMART" id="SM00389">
    <property type="entry name" value="HOX"/>
    <property type="match status" value="1"/>
</dbReference>
<dbReference type="SUPFAM" id="SSF46689">
    <property type="entry name" value="Homeodomain-like"/>
    <property type="match status" value="1"/>
</dbReference>
<dbReference type="PROSITE" id="PS00027">
    <property type="entry name" value="HOMEOBOX_1"/>
    <property type="match status" value="1"/>
</dbReference>
<dbReference type="PROSITE" id="PS50071">
    <property type="entry name" value="HOMEOBOX_2"/>
    <property type="match status" value="1"/>
</dbReference>
<accession>Q9YGT5</accession>
<accession>Q4PRA6</accession>
<accession>Q503J9</accession>
<accession>Q8AWY3</accession>
<keyword id="KW-0217">Developmental protein</keyword>
<keyword id="KW-0238">DNA-binding</keyword>
<keyword id="KW-0371">Homeobox</keyword>
<keyword id="KW-0539">Nucleus</keyword>
<keyword id="KW-1185">Reference proteome</keyword>
<keyword id="KW-0804">Transcription</keyword>
<keyword id="KW-0805">Transcription regulation</keyword>